<gene>
    <name evidence="1" type="primary">purC</name>
    <name type="ordered locus">SO_4066</name>
</gene>
<organism>
    <name type="scientific">Shewanella oneidensis (strain ATCC 700550 / JCM 31522 / CIP 106686 / LMG 19005 / NCIMB 14063 / MR-1)</name>
    <dbReference type="NCBI Taxonomy" id="211586"/>
    <lineage>
        <taxon>Bacteria</taxon>
        <taxon>Pseudomonadati</taxon>
        <taxon>Pseudomonadota</taxon>
        <taxon>Gammaproteobacteria</taxon>
        <taxon>Alteromonadales</taxon>
        <taxon>Shewanellaceae</taxon>
        <taxon>Shewanella</taxon>
    </lineage>
</organism>
<keyword id="KW-0067">ATP-binding</keyword>
<keyword id="KW-0436">Ligase</keyword>
<keyword id="KW-0547">Nucleotide-binding</keyword>
<keyword id="KW-0658">Purine biosynthesis</keyword>
<keyword id="KW-1185">Reference proteome</keyword>
<comment type="catalytic activity">
    <reaction evidence="1">
        <text>5-amino-1-(5-phospho-D-ribosyl)imidazole-4-carboxylate + L-aspartate + ATP = (2S)-2-[5-amino-1-(5-phospho-beta-D-ribosyl)imidazole-4-carboxamido]succinate + ADP + phosphate + 2 H(+)</text>
        <dbReference type="Rhea" id="RHEA:22628"/>
        <dbReference type="ChEBI" id="CHEBI:15378"/>
        <dbReference type="ChEBI" id="CHEBI:29991"/>
        <dbReference type="ChEBI" id="CHEBI:30616"/>
        <dbReference type="ChEBI" id="CHEBI:43474"/>
        <dbReference type="ChEBI" id="CHEBI:58443"/>
        <dbReference type="ChEBI" id="CHEBI:77657"/>
        <dbReference type="ChEBI" id="CHEBI:456216"/>
        <dbReference type="EC" id="6.3.2.6"/>
    </reaction>
</comment>
<comment type="pathway">
    <text evidence="1">Purine metabolism; IMP biosynthesis via de novo pathway; 5-amino-1-(5-phospho-D-ribosyl)imidazole-4-carboxamide from 5-amino-1-(5-phospho-D-ribosyl)imidazole-4-carboxylate: step 1/2.</text>
</comment>
<comment type="similarity">
    <text evidence="1">Belongs to the SAICAR synthetase family.</text>
</comment>
<protein>
    <recommendedName>
        <fullName evidence="1">Phosphoribosylaminoimidazole-succinocarboxamide synthase</fullName>
        <ecNumber evidence="1">6.3.2.6</ecNumber>
    </recommendedName>
    <alternativeName>
        <fullName evidence="1">SAICAR synthetase</fullName>
    </alternativeName>
</protein>
<proteinExistence type="inferred from homology"/>
<reference key="1">
    <citation type="journal article" date="2002" name="Nat. Biotechnol.">
        <title>Genome sequence of the dissimilatory metal ion-reducing bacterium Shewanella oneidensis.</title>
        <authorList>
            <person name="Heidelberg J.F."/>
            <person name="Paulsen I.T."/>
            <person name="Nelson K.E."/>
            <person name="Gaidos E.J."/>
            <person name="Nelson W.C."/>
            <person name="Read T.D."/>
            <person name="Eisen J.A."/>
            <person name="Seshadri R."/>
            <person name="Ward N.L."/>
            <person name="Methe B.A."/>
            <person name="Clayton R.A."/>
            <person name="Meyer T."/>
            <person name="Tsapin A."/>
            <person name="Scott J."/>
            <person name="Beanan M.J."/>
            <person name="Brinkac L.M."/>
            <person name="Daugherty S.C."/>
            <person name="DeBoy R.T."/>
            <person name="Dodson R.J."/>
            <person name="Durkin A.S."/>
            <person name="Haft D.H."/>
            <person name="Kolonay J.F."/>
            <person name="Madupu R."/>
            <person name="Peterson J.D."/>
            <person name="Umayam L.A."/>
            <person name="White O."/>
            <person name="Wolf A.M."/>
            <person name="Vamathevan J.J."/>
            <person name="Weidman J.F."/>
            <person name="Impraim M."/>
            <person name="Lee K."/>
            <person name="Berry K.J."/>
            <person name="Lee C."/>
            <person name="Mueller J."/>
            <person name="Khouri H.M."/>
            <person name="Gill J."/>
            <person name="Utterback T.R."/>
            <person name="McDonald L.A."/>
            <person name="Feldblyum T.V."/>
            <person name="Smith H.O."/>
            <person name="Venter J.C."/>
            <person name="Nealson K.H."/>
            <person name="Fraser C.M."/>
        </authorList>
    </citation>
    <scope>NUCLEOTIDE SEQUENCE [LARGE SCALE GENOMIC DNA]</scope>
    <source>
        <strain>ATCC 700550 / JCM 31522 / CIP 106686 / LMG 19005 / NCIMB 14063 / MR-1</strain>
    </source>
</reference>
<feature type="chain" id="PRO_0000100867" description="Phosphoribosylaminoimidazole-succinocarboxamide synthase">
    <location>
        <begin position="1"/>
        <end position="367"/>
    </location>
</feature>
<sequence>MSLADSVLAVNNDLPIRTDKSVHSGKVRSVYWLTDADSRRLIKTKGYNVPEDTPLAIMVISDRISAFDCIFHGEGGLKGIPGKGAALNAISNHWFKLFAENGLADSHILDIPHPFVWIVQKARPIKVEAICRQYITGSMWRAYSKGERVFCGITLPEGLEKDQKLPELLITPSTKGILTGIPGVPAQDDVNISRSDIEANYQAFGFEKVEDIDLYEKLLKDGFKVISKALADLDQVFVDTKFEFGYVTDQDGNSKLIYMDEVGTPDSSRIWDGAAYRDGKILENSKEGFRQFLLNHFPDPDILLNKDRMPEREALARDNALPLEAMMQVSRTYTGIAEKVTGAAIPLPANPKADIIKILREEYDLIV</sequence>
<evidence type="ECO:0000255" key="1">
    <source>
        <dbReference type="HAMAP-Rule" id="MF_00137"/>
    </source>
</evidence>
<accession>Q8EA43</accession>
<name>PUR7_SHEON</name>
<dbReference type="EC" id="6.3.2.6" evidence="1"/>
<dbReference type="EMBL" id="AE014299">
    <property type="protein sequence ID" value="AAN57040.1"/>
    <property type="molecule type" value="Genomic_DNA"/>
</dbReference>
<dbReference type="RefSeq" id="NP_719596.1">
    <property type="nucleotide sequence ID" value="NC_004347.2"/>
</dbReference>
<dbReference type="RefSeq" id="WP_011073777.1">
    <property type="nucleotide sequence ID" value="NC_004347.2"/>
</dbReference>
<dbReference type="SMR" id="Q8EA43"/>
<dbReference type="STRING" id="211586.SO_4066"/>
<dbReference type="PaxDb" id="211586-SO_4066"/>
<dbReference type="KEGG" id="son:SO_4066"/>
<dbReference type="PATRIC" id="fig|211586.12.peg.3936"/>
<dbReference type="eggNOG" id="COG0152">
    <property type="taxonomic scope" value="Bacteria"/>
</dbReference>
<dbReference type="HOGENOM" id="CLU_064197_0_0_6"/>
<dbReference type="OrthoDB" id="9801549at2"/>
<dbReference type="PhylomeDB" id="Q8EA43"/>
<dbReference type="BioCyc" id="SONE211586:G1GMP-3761-MONOMER"/>
<dbReference type="UniPathway" id="UPA00074">
    <property type="reaction ID" value="UER00131"/>
</dbReference>
<dbReference type="Proteomes" id="UP000008186">
    <property type="component" value="Chromosome"/>
</dbReference>
<dbReference type="GO" id="GO:0005524">
    <property type="term" value="F:ATP binding"/>
    <property type="evidence" value="ECO:0007669"/>
    <property type="project" value="UniProtKB-KW"/>
</dbReference>
<dbReference type="GO" id="GO:0004639">
    <property type="term" value="F:phosphoribosylaminoimidazolesuccinocarboxamide synthase activity"/>
    <property type="evidence" value="ECO:0000318"/>
    <property type="project" value="GO_Central"/>
</dbReference>
<dbReference type="GO" id="GO:0006189">
    <property type="term" value="P:'de novo' IMP biosynthetic process"/>
    <property type="evidence" value="ECO:0000318"/>
    <property type="project" value="GO_Central"/>
</dbReference>
<dbReference type="CDD" id="cd01414">
    <property type="entry name" value="SAICAR_synt_Sc"/>
    <property type="match status" value="1"/>
</dbReference>
<dbReference type="FunFam" id="3.30.200.20:FF:000597">
    <property type="entry name" value="Phosphoribosylaminoimidazole-succinocarboxamide synthase"/>
    <property type="match status" value="1"/>
</dbReference>
<dbReference type="FunFam" id="3.30.470.20:FF:000067">
    <property type="entry name" value="Phosphoribosylaminoimidazole-succinocarboxamide synthase"/>
    <property type="match status" value="1"/>
</dbReference>
<dbReference type="Gene3D" id="3.30.470.20">
    <property type="entry name" value="ATP-grasp fold, B domain"/>
    <property type="match status" value="1"/>
</dbReference>
<dbReference type="Gene3D" id="3.30.200.20">
    <property type="entry name" value="Phosphorylase Kinase, domain 1"/>
    <property type="match status" value="1"/>
</dbReference>
<dbReference type="HAMAP" id="MF_00137">
    <property type="entry name" value="SAICAR_synth"/>
    <property type="match status" value="1"/>
</dbReference>
<dbReference type="InterPro" id="IPR028923">
    <property type="entry name" value="SAICAR_synt/ADE2_N"/>
</dbReference>
<dbReference type="InterPro" id="IPR014106">
    <property type="entry name" value="SAICAR_synthase_Vibrio-typ"/>
</dbReference>
<dbReference type="InterPro" id="IPR018236">
    <property type="entry name" value="SAICAR_synthetase_CS"/>
</dbReference>
<dbReference type="NCBIfam" id="NF010567">
    <property type="entry name" value="PRK13960.1"/>
    <property type="match status" value="1"/>
</dbReference>
<dbReference type="NCBIfam" id="TIGR02735">
    <property type="entry name" value="purC_vibrio"/>
    <property type="match status" value="1"/>
</dbReference>
<dbReference type="PANTHER" id="PTHR43700">
    <property type="entry name" value="PHOSPHORIBOSYLAMINOIMIDAZOLE-SUCCINOCARBOXAMIDE SYNTHASE"/>
    <property type="match status" value="1"/>
</dbReference>
<dbReference type="PANTHER" id="PTHR43700:SF1">
    <property type="entry name" value="PHOSPHORIBOSYLAMINOIMIDAZOLE-SUCCINOCARBOXAMIDE SYNTHASE"/>
    <property type="match status" value="1"/>
</dbReference>
<dbReference type="Pfam" id="PF01259">
    <property type="entry name" value="SAICAR_synt"/>
    <property type="match status" value="1"/>
</dbReference>
<dbReference type="SUPFAM" id="SSF56104">
    <property type="entry name" value="SAICAR synthase-like"/>
    <property type="match status" value="1"/>
</dbReference>
<dbReference type="PROSITE" id="PS01057">
    <property type="entry name" value="SAICAR_SYNTHETASE_1"/>
    <property type="match status" value="1"/>
</dbReference>